<feature type="chain" id="PRO_0000316096" description="GMP synthase [glutamine-hydrolyzing] subunit A">
    <location>
        <begin position="1"/>
        <end position="189"/>
    </location>
</feature>
<feature type="domain" description="Glutamine amidotransferase type-1" evidence="1">
    <location>
        <begin position="1"/>
        <end position="189"/>
    </location>
</feature>
<feature type="active site" description="Nucleophile" evidence="1">
    <location>
        <position position="76"/>
    </location>
</feature>
<feature type="active site" evidence="1">
    <location>
        <position position="163"/>
    </location>
</feature>
<feature type="active site" evidence="1">
    <location>
        <position position="165"/>
    </location>
</feature>
<organism>
    <name type="scientific">Methanococcus vannielii (strain ATCC 35089 / DSM 1224 / JCM 13029 / OCM 148 / SB)</name>
    <dbReference type="NCBI Taxonomy" id="406327"/>
    <lineage>
        <taxon>Archaea</taxon>
        <taxon>Methanobacteriati</taxon>
        <taxon>Methanobacteriota</taxon>
        <taxon>Methanomada group</taxon>
        <taxon>Methanococci</taxon>
        <taxon>Methanococcales</taxon>
        <taxon>Methanococcaceae</taxon>
        <taxon>Methanococcus</taxon>
    </lineage>
</organism>
<accession>A6UQ90</accession>
<dbReference type="EC" id="6.3.5.2" evidence="1"/>
<dbReference type="EMBL" id="CP000742">
    <property type="protein sequence ID" value="ABR54662.1"/>
    <property type="molecule type" value="Genomic_DNA"/>
</dbReference>
<dbReference type="RefSeq" id="WP_011972564.1">
    <property type="nucleotide sequence ID" value="NC_009634.1"/>
</dbReference>
<dbReference type="SMR" id="A6UQ90"/>
<dbReference type="STRING" id="406327.Mevan_0756"/>
<dbReference type="MEROPS" id="C26.A31"/>
<dbReference type="GeneID" id="5324552"/>
<dbReference type="KEGG" id="mvn:Mevan_0756"/>
<dbReference type="eggNOG" id="arCOG00087">
    <property type="taxonomic scope" value="Archaea"/>
</dbReference>
<dbReference type="HOGENOM" id="CLU_014340_1_4_2"/>
<dbReference type="OrthoDB" id="10772at2157"/>
<dbReference type="UniPathway" id="UPA00189">
    <property type="reaction ID" value="UER00296"/>
</dbReference>
<dbReference type="Proteomes" id="UP000001107">
    <property type="component" value="Chromosome"/>
</dbReference>
<dbReference type="GO" id="GO:0005829">
    <property type="term" value="C:cytosol"/>
    <property type="evidence" value="ECO:0007669"/>
    <property type="project" value="TreeGrafter"/>
</dbReference>
<dbReference type="GO" id="GO:0005524">
    <property type="term" value="F:ATP binding"/>
    <property type="evidence" value="ECO:0007669"/>
    <property type="project" value="UniProtKB-KW"/>
</dbReference>
<dbReference type="GO" id="GO:0003921">
    <property type="term" value="F:GMP synthase activity"/>
    <property type="evidence" value="ECO:0007669"/>
    <property type="project" value="TreeGrafter"/>
</dbReference>
<dbReference type="CDD" id="cd01742">
    <property type="entry name" value="GATase1_GMP_Synthase"/>
    <property type="match status" value="1"/>
</dbReference>
<dbReference type="FunFam" id="3.40.50.880:FF:000047">
    <property type="entry name" value="GMP synthase [glutamine-hydrolyzing] subunit A"/>
    <property type="match status" value="1"/>
</dbReference>
<dbReference type="Gene3D" id="3.40.50.880">
    <property type="match status" value="1"/>
</dbReference>
<dbReference type="HAMAP" id="MF_01510">
    <property type="entry name" value="GMP_synthase_A"/>
    <property type="match status" value="1"/>
</dbReference>
<dbReference type="InterPro" id="IPR029062">
    <property type="entry name" value="Class_I_gatase-like"/>
</dbReference>
<dbReference type="InterPro" id="IPR017926">
    <property type="entry name" value="GATASE"/>
</dbReference>
<dbReference type="InterPro" id="IPR004739">
    <property type="entry name" value="GMP_synth_GATase"/>
</dbReference>
<dbReference type="InterPro" id="IPR023686">
    <property type="entry name" value="GMP_synthase_A"/>
</dbReference>
<dbReference type="NCBIfam" id="TIGR00888">
    <property type="entry name" value="guaA_Nterm"/>
    <property type="match status" value="1"/>
</dbReference>
<dbReference type="NCBIfam" id="NF001975">
    <property type="entry name" value="PRK00758.1"/>
    <property type="match status" value="1"/>
</dbReference>
<dbReference type="PANTHER" id="PTHR11922:SF2">
    <property type="entry name" value="GMP SYNTHASE [GLUTAMINE-HYDROLYZING]"/>
    <property type="match status" value="1"/>
</dbReference>
<dbReference type="PANTHER" id="PTHR11922">
    <property type="entry name" value="GMP SYNTHASE-RELATED"/>
    <property type="match status" value="1"/>
</dbReference>
<dbReference type="Pfam" id="PF00117">
    <property type="entry name" value="GATase"/>
    <property type="match status" value="1"/>
</dbReference>
<dbReference type="PRINTS" id="PR00097">
    <property type="entry name" value="ANTSNTHASEII"/>
</dbReference>
<dbReference type="PRINTS" id="PR00096">
    <property type="entry name" value="GATASE"/>
</dbReference>
<dbReference type="SUPFAM" id="SSF52317">
    <property type="entry name" value="Class I glutamine amidotransferase-like"/>
    <property type="match status" value="1"/>
</dbReference>
<dbReference type="PROSITE" id="PS51273">
    <property type="entry name" value="GATASE_TYPE_1"/>
    <property type="match status" value="1"/>
</dbReference>
<name>GUAAA_METVS</name>
<keyword id="KW-0067">ATP-binding</keyword>
<keyword id="KW-0315">Glutamine amidotransferase</keyword>
<keyword id="KW-0332">GMP biosynthesis</keyword>
<keyword id="KW-0436">Ligase</keyword>
<keyword id="KW-0547">Nucleotide-binding</keyword>
<keyword id="KW-0658">Purine biosynthesis</keyword>
<evidence type="ECO:0000255" key="1">
    <source>
        <dbReference type="HAMAP-Rule" id="MF_01510"/>
    </source>
</evidence>
<gene>
    <name evidence="1" type="primary">guaAA</name>
    <name type="ordered locus">Mevan_0756</name>
</gene>
<proteinExistence type="inferred from homology"/>
<comment type="function">
    <text evidence="1">Catalyzes the synthesis of GMP from XMP.</text>
</comment>
<comment type="catalytic activity">
    <reaction evidence="1">
        <text>XMP + L-glutamine + ATP + H2O = GMP + L-glutamate + AMP + diphosphate + 2 H(+)</text>
        <dbReference type="Rhea" id="RHEA:11680"/>
        <dbReference type="ChEBI" id="CHEBI:15377"/>
        <dbReference type="ChEBI" id="CHEBI:15378"/>
        <dbReference type="ChEBI" id="CHEBI:29985"/>
        <dbReference type="ChEBI" id="CHEBI:30616"/>
        <dbReference type="ChEBI" id="CHEBI:33019"/>
        <dbReference type="ChEBI" id="CHEBI:57464"/>
        <dbReference type="ChEBI" id="CHEBI:58115"/>
        <dbReference type="ChEBI" id="CHEBI:58359"/>
        <dbReference type="ChEBI" id="CHEBI:456215"/>
        <dbReference type="EC" id="6.3.5.2"/>
    </reaction>
</comment>
<comment type="pathway">
    <text evidence="1">Purine metabolism; GMP biosynthesis; GMP from XMP (L-Gln route): step 1/1.</text>
</comment>
<comment type="subunit">
    <text evidence="1">Heterodimer composed of a glutamine amidotransferase subunit (A) and a GMP-binding subunit (B).</text>
</comment>
<protein>
    <recommendedName>
        <fullName evidence="1">GMP synthase [glutamine-hydrolyzing] subunit A</fullName>
        <ecNumber evidence="1">6.3.5.2</ecNumber>
    </recommendedName>
    <alternativeName>
        <fullName evidence="1">Glutamine amidotransferase</fullName>
    </alternativeName>
</protein>
<reference key="1">
    <citation type="submission" date="2007-06" db="EMBL/GenBank/DDBJ databases">
        <title>Complete sequence of Methanococcus vannielii SB.</title>
        <authorList>
            <consortium name="US DOE Joint Genome Institute"/>
            <person name="Copeland A."/>
            <person name="Lucas S."/>
            <person name="Lapidus A."/>
            <person name="Barry K."/>
            <person name="Glavina del Rio T."/>
            <person name="Dalin E."/>
            <person name="Tice H."/>
            <person name="Pitluck S."/>
            <person name="Chain P."/>
            <person name="Malfatti S."/>
            <person name="Shin M."/>
            <person name="Vergez L."/>
            <person name="Schmutz J."/>
            <person name="Larimer F."/>
            <person name="Land M."/>
            <person name="Hauser L."/>
            <person name="Kyrpides N."/>
            <person name="Anderson I."/>
            <person name="Sieprawska-Lupa M."/>
            <person name="Whitman W.B."/>
            <person name="Richardson P."/>
        </authorList>
    </citation>
    <scope>NUCLEOTIDE SEQUENCE [LARGE SCALE GENOMIC DNA]</scope>
    <source>
        <strain>ATCC 35089 / DSM 1224 / JCM 13029 / OCM 148 / SB</strain>
    </source>
</reference>
<sequence length="189" mass="21181">MIVILNNGGQYVHRIQRSLKYIGVPAKIVLNSTNLEEIEKNPEIKGIILSGGPDITKATNCENIALNSKLPVLGICLGHQLISKAYGGKVKRAESEEYASIKIHVKYENDIFKNVPNEFTAWASHMDEVKEIPDCLEVLAFSEICGVEAFKHKEKLVYGVQFHPEVSHTEHGELILKNFCKVCGFKFNE</sequence>